<keyword id="KW-0131">Cell cycle</keyword>
<keyword id="KW-0132">Cell division</keyword>
<keyword id="KW-0159">Chromosome partition</keyword>
<keyword id="KW-0963">Cytoplasm</keyword>
<keyword id="KW-0229">DNA integration</keyword>
<keyword id="KW-0233">DNA recombination</keyword>
<keyword id="KW-0238">DNA-binding</keyword>
<evidence type="ECO:0000255" key="1">
    <source>
        <dbReference type="HAMAP-Rule" id="MF_01808"/>
    </source>
</evidence>
<evidence type="ECO:0000255" key="2">
    <source>
        <dbReference type="PROSITE-ProRule" id="PRU01246"/>
    </source>
</evidence>
<evidence type="ECO:0000255" key="3">
    <source>
        <dbReference type="PROSITE-ProRule" id="PRU01248"/>
    </source>
</evidence>
<feature type="chain" id="PRO_0000095299" description="Tyrosine recombinase XerC">
    <location>
        <begin position="1"/>
        <end position="295"/>
    </location>
</feature>
<feature type="domain" description="Core-binding (CB)" evidence="3">
    <location>
        <begin position="1"/>
        <end position="84"/>
    </location>
</feature>
<feature type="domain" description="Tyr recombinase" evidence="2">
    <location>
        <begin position="105"/>
        <end position="289"/>
    </location>
</feature>
<feature type="active site" evidence="1">
    <location>
        <position position="145"/>
    </location>
</feature>
<feature type="active site" evidence="1">
    <location>
        <position position="169"/>
    </location>
</feature>
<feature type="active site" evidence="1">
    <location>
        <position position="241"/>
    </location>
</feature>
<feature type="active site" evidence="1">
    <location>
        <position position="244"/>
    </location>
</feature>
<feature type="active site" evidence="1">
    <location>
        <position position="267"/>
    </location>
</feature>
<feature type="active site" description="O-(3'-phospho-DNA)-tyrosine intermediate" evidence="1">
    <location>
        <position position="276"/>
    </location>
</feature>
<organism>
    <name type="scientific">Lactobacillus leichmannii</name>
    <dbReference type="NCBI Taxonomy" id="28039"/>
    <lineage>
        <taxon>Bacteria</taxon>
        <taxon>Bacillati</taxon>
        <taxon>Bacillota</taxon>
        <taxon>Bacilli</taxon>
        <taxon>Lactobacillales</taxon>
        <taxon>Lactobacillaceae</taxon>
        <taxon>Lactobacillus</taxon>
    </lineage>
</organism>
<reference key="1">
    <citation type="journal article" date="1996" name="Curr. Microbiol.">
        <title>Molecular characterization of the xerC gene of Lactobacillus leichmannii encoding a site-specific recombinase and two adjacent heat shock genes.</title>
        <authorList>
            <person name="Becker J."/>
            <person name="Brendel M."/>
        </authorList>
    </citation>
    <scope>NUCLEOTIDE SEQUENCE [GENOMIC DNA]</scope>
    <source>
        <strain>ATCC 4797 / DSM 20076 / BCRC 10699 / JCM 1148 / NBRC 3073 / NCIMB 7854 / 326 / F59</strain>
    </source>
</reference>
<name>XERC_LACLE</name>
<comment type="function">
    <text evidence="1">Site-specific tyrosine recombinase, which acts by catalyzing the cutting and rejoining of the recombining DNA molecules. The XerC-XerD complex is essential to convert dimers of the bacterial chromosome into monomers to permit their segregation at cell division. It also contributes to the segregational stability of plasmids.</text>
</comment>
<comment type="subunit">
    <text evidence="1">Forms a cyclic heterotetrameric complex composed of two molecules of XerC and two molecules of XerD.</text>
</comment>
<comment type="subcellular location">
    <subcellularLocation>
        <location evidence="1">Cytoplasm</location>
    </subcellularLocation>
</comment>
<comment type="similarity">
    <text evidence="1">Belongs to the 'phage' integrase family. XerC subfamily.</text>
</comment>
<accession>Q48733</accession>
<gene>
    <name evidence="1" type="primary">xerC</name>
</gene>
<sequence>MTLEEQFLSYLKNERSYSPKTVLAYQKDLAAAKKFWQENGGFPGWDQISRRDLEIYLLATGQKLASSTLSRKLSSLKSFYRLLTRRGLVKADPTVAIQLRRGKKKLPEFFYQDEVGQVIRSLNDGKPLTVRNRAIVALFYATGMRLSELTDLKIKQLDLENGMILVHGKGNKDRYVFFDQESKKYLEEYLQVARPSLLKNEPDTEAVFLNKLGRPISSRGIAKAVQQIFQKAGLTAGAHPHELRHSFATAMLNNGADLRSVQELLGHEDLSTTQIYTHVSMQHLTAEYRQHFPRK</sequence>
<proteinExistence type="inferred from homology"/>
<protein>
    <recommendedName>
        <fullName evidence="1">Tyrosine recombinase XerC</fullName>
    </recommendedName>
</protein>
<dbReference type="EMBL" id="X84261">
    <property type="protein sequence ID" value="CAA59018.1"/>
    <property type="molecule type" value="Genomic_DNA"/>
</dbReference>
<dbReference type="RefSeq" id="WP_035184589.1">
    <property type="nucleotide sequence ID" value="NZ_QOCY01000053.1"/>
</dbReference>
<dbReference type="SMR" id="Q48733"/>
<dbReference type="GO" id="GO:0005737">
    <property type="term" value="C:cytoplasm"/>
    <property type="evidence" value="ECO:0007669"/>
    <property type="project" value="UniProtKB-SubCell"/>
</dbReference>
<dbReference type="GO" id="GO:0003677">
    <property type="term" value="F:DNA binding"/>
    <property type="evidence" value="ECO:0007669"/>
    <property type="project" value="UniProtKB-KW"/>
</dbReference>
<dbReference type="GO" id="GO:0009037">
    <property type="term" value="F:tyrosine-based site-specific recombinase activity"/>
    <property type="evidence" value="ECO:0007669"/>
    <property type="project" value="UniProtKB-UniRule"/>
</dbReference>
<dbReference type="GO" id="GO:0051301">
    <property type="term" value="P:cell division"/>
    <property type="evidence" value="ECO:0007669"/>
    <property type="project" value="UniProtKB-KW"/>
</dbReference>
<dbReference type="GO" id="GO:0007059">
    <property type="term" value="P:chromosome segregation"/>
    <property type="evidence" value="ECO:0007669"/>
    <property type="project" value="UniProtKB-UniRule"/>
</dbReference>
<dbReference type="GO" id="GO:0006313">
    <property type="term" value="P:DNA transposition"/>
    <property type="evidence" value="ECO:0007669"/>
    <property type="project" value="UniProtKB-UniRule"/>
</dbReference>
<dbReference type="CDD" id="cd00798">
    <property type="entry name" value="INT_XerDC_C"/>
    <property type="match status" value="1"/>
</dbReference>
<dbReference type="Gene3D" id="1.10.150.130">
    <property type="match status" value="1"/>
</dbReference>
<dbReference type="Gene3D" id="1.10.443.10">
    <property type="entry name" value="Intergrase catalytic core"/>
    <property type="match status" value="1"/>
</dbReference>
<dbReference type="HAMAP" id="MF_01808">
    <property type="entry name" value="Recomb_XerC_XerD"/>
    <property type="match status" value="1"/>
</dbReference>
<dbReference type="InterPro" id="IPR044068">
    <property type="entry name" value="CB"/>
</dbReference>
<dbReference type="InterPro" id="IPR011010">
    <property type="entry name" value="DNA_brk_join_enz"/>
</dbReference>
<dbReference type="InterPro" id="IPR013762">
    <property type="entry name" value="Integrase-like_cat_sf"/>
</dbReference>
<dbReference type="InterPro" id="IPR002104">
    <property type="entry name" value="Integrase_catalytic"/>
</dbReference>
<dbReference type="InterPro" id="IPR010998">
    <property type="entry name" value="Integrase_recombinase_N"/>
</dbReference>
<dbReference type="InterPro" id="IPR004107">
    <property type="entry name" value="Integrase_SAM-like_N"/>
</dbReference>
<dbReference type="InterPro" id="IPR011931">
    <property type="entry name" value="Recomb_XerC"/>
</dbReference>
<dbReference type="InterPro" id="IPR023009">
    <property type="entry name" value="Tyrosine_recombinase_XerC/XerD"/>
</dbReference>
<dbReference type="InterPro" id="IPR050090">
    <property type="entry name" value="Tyrosine_recombinase_XerCD"/>
</dbReference>
<dbReference type="NCBIfam" id="NF040815">
    <property type="entry name" value="recomb_XerA_Arch"/>
    <property type="match status" value="1"/>
</dbReference>
<dbReference type="NCBIfam" id="TIGR02224">
    <property type="entry name" value="recomb_XerC"/>
    <property type="match status" value="1"/>
</dbReference>
<dbReference type="PANTHER" id="PTHR30349">
    <property type="entry name" value="PHAGE INTEGRASE-RELATED"/>
    <property type="match status" value="1"/>
</dbReference>
<dbReference type="PANTHER" id="PTHR30349:SF77">
    <property type="entry name" value="TYROSINE RECOMBINASE XERC"/>
    <property type="match status" value="1"/>
</dbReference>
<dbReference type="Pfam" id="PF02899">
    <property type="entry name" value="Phage_int_SAM_1"/>
    <property type="match status" value="1"/>
</dbReference>
<dbReference type="Pfam" id="PF00589">
    <property type="entry name" value="Phage_integrase"/>
    <property type="match status" value="1"/>
</dbReference>
<dbReference type="SUPFAM" id="SSF56349">
    <property type="entry name" value="DNA breaking-rejoining enzymes"/>
    <property type="match status" value="1"/>
</dbReference>
<dbReference type="PROSITE" id="PS51900">
    <property type="entry name" value="CB"/>
    <property type="match status" value="1"/>
</dbReference>
<dbReference type="PROSITE" id="PS51898">
    <property type="entry name" value="TYR_RECOMBINASE"/>
    <property type="match status" value="1"/>
</dbReference>